<dbReference type="EC" id="6.3.2.9" evidence="1"/>
<dbReference type="EMBL" id="CP001015">
    <property type="protein sequence ID" value="ACF55831.1"/>
    <property type="molecule type" value="Genomic_DNA"/>
</dbReference>
<dbReference type="SMR" id="B5E2Z8"/>
<dbReference type="KEGG" id="spx:SPG_0628"/>
<dbReference type="HOGENOM" id="CLU_032540_0_1_9"/>
<dbReference type="UniPathway" id="UPA00219"/>
<dbReference type="GO" id="GO:0005737">
    <property type="term" value="C:cytoplasm"/>
    <property type="evidence" value="ECO:0007669"/>
    <property type="project" value="UniProtKB-SubCell"/>
</dbReference>
<dbReference type="GO" id="GO:0005524">
    <property type="term" value="F:ATP binding"/>
    <property type="evidence" value="ECO:0007669"/>
    <property type="project" value="UniProtKB-UniRule"/>
</dbReference>
<dbReference type="GO" id="GO:0008764">
    <property type="term" value="F:UDP-N-acetylmuramoylalanine-D-glutamate ligase activity"/>
    <property type="evidence" value="ECO:0007669"/>
    <property type="project" value="UniProtKB-UniRule"/>
</dbReference>
<dbReference type="GO" id="GO:0051301">
    <property type="term" value="P:cell division"/>
    <property type="evidence" value="ECO:0007669"/>
    <property type="project" value="UniProtKB-KW"/>
</dbReference>
<dbReference type="GO" id="GO:0071555">
    <property type="term" value="P:cell wall organization"/>
    <property type="evidence" value="ECO:0007669"/>
    <property type="project" value="UniProtKB-KW"/>
</dbReference>
<dbReference type="GO" id="GO:0009252">
    <property type="term" value="P:peptidoglycan biosynthetic process"/>
    <property type="evidence" value="ECO:0007669"/>
    <property type="project" value="UniProtKB-UniRule"/>
</dbReference>
<dbReference type="GO" id="GO:0008360">
    <property type="term" value="P:regulation of cell shape"/>
    <property type="evidence" value="ECO:0007669"/>
    <property type="project" value="UniProtKB-KW"/>
</dbReference>
<dbReference type="Gene3D" id="3.90.190.20">
    <property type="entry name" value="Mur ligase, C-terminal domain"/>
    <property type="match status" value="1"/>
</dbReference>
<dbReference type="Gene3D" id="3.40.1190.10">
    <property type="entry name" value="Mur-like, catalytic domain"/>
    <property type="match status" value="1"/>
</dbReference>
<dbReference type="Gene3D" id="3.40.50.720">
    <property type="entry name" value="NAD(P)-binding Rossmann-like Domain"/>
    <property type="match status" value="1"/>
</dbReference>
<dbReference type="HAMAP" id="MF_00639">
    <property type="entry name" value="MurD"/>
    <property type="match status" value="1"/>
</dbReference>
<dbReference type="InterPro" id="IPR036565">
    <property type="entry name" value="Mur-like_cat_sf"/>
</dbReference>
<dbReference type="InterPro" id="IPR004101">
    <property type="entry name" value="Mur_ligase_C"/>
</dbReference>
<dbReference type="InterPro" id="IPR036615">
    <property type="entry name" value="Mur_ligase_C_dom_sf"/>
</dbReference>
<dbReference type="InterPro" id="IPR013221">
    <property type="entry name" value="Mur_ligase_cen"/>
</dbReference>
<dbReference type="InterPro" id="IPR005762">
    <property type="entry name" value="MurD"/>
</dbReference>
<dbReference type="NCBIfam" id="TIGR01087">
    <property type="entry name" value="murD"/>
    <property type="match status" value="1"/>
</dbReference>
<dbReference type="PANTHER" id="PTHR43692">
    <property type="entry name" value="UDP-N-ACETYLMURAMOYLALANINE--D-GLUTAMATE LIGASE"/>
    <property type="match status" value="1"/>
</dbReference>
<dbReference type="PANTHER" id="PTHR43692:SF1">
    <property type="entry name" value="UDP-N-ACETYLMURAMOYLALANINE--D-GLUTAMATE LIGASE"/>
    <property type="match status" value="1"/>
</dbReference>
<dbReference type="Pfam" id="PF02875">
    <property type="entry name" value="Mur_ligase_C"/>
    <property type="match status" value="1"/>
</dbReference>
<dbReference type="Pfam" id="PF08245">
    <property type="entry name" value="Mur_ligase_M"/>
    <property type="match status" value="1"/>
</dbReference>
<dbReference type="Pfam" id="PF21799">
    <property type="entry name" value="MurD-like_N"/>
    <property type="match status" value="1"/>
</dbReference>
<dbReference type="SUPFAM" id="SSF51984">
    <property type="entry name" value="MurCD N-terminal domain"/>
    <property type="match status" value="1"/>
</dbReference>
<dbReference type="SUPFAM" id="SSF53623">
    <property type="entry name" value="MurD-like peptide ligases, catalytic domain"/>
    <property type="match status" value="1"/>
</dbReference>
<dbReference type="SUPFAM" id="SSF53244">
    <property type="entry name" value="MurD-like peptide ligases, peptide-binding domain"/>
    <property type="match status" value="1"/>
</dbReference>
<sequence length="450" mass="48491">MKVIDQFKNKKVLVLGLAKSGESAARLLDKLGAIVTVNDGKPFEDNPAAQCLLEEGIKVITGGHPLELLDEEFALMVKNPGIPYSNPMIEKALAKGIPVLTEVELAYLISEAPIIGITGSNGKTTTTTMIGEVLTAAGQHGLLSGNIGYPASQVAQIATDKNTLVMELSSFQLMGVQEFHPEIAVITNLMPTHIDYHGLFEEYVAAKWNIQNKMTAADFLVLNFNQDLVKDLASKTEATVVPFSTLEKVDGAYLEDGQLYFRGEVVMAANEIGVPGSHNVENALATIAVAKLRGVDNQTIKETLSAFGGVKHRLQFVDDIKGVKFYNDSKSTNILATQKALSGFDNSKVVLIAGGLDRGNEFDELVPDITGLKKMVILGQSAERVKRAADKAGVAYVEATDIADATRKAYELATQGDVVLLSPANASWDMYANFEVRGDLFIDTVAELKE</sequence>
<reference key="1">
    <citation type="journal article" date="2001" name="Microb. Drug Resist.">
        <title>Annotated draft genomic sequence from a Streptococcus pneumoniae type 19F clinical isolate.</title>
        <authorList>
            <person name="Dopazo J."/>
            <person name="Mendoza A."/>
            <person name="Herrero J."/>
            <person name="Caldara F."/>
            <person name="Humbert Y."/>
            <person name="Friedli L."/>
            <person name="Guerrier M."/>
            <person name="Grand-Schenk E."/>
            <person name="Gandin C."/>
            <person name="de Francesco M."/>
            <person name="Polissi A."/>
            <person name="Buell G."/>
            <person name="Feger G."/>
            <person name="Garcia E."/>
            <person name="Peitsch M."/>
            <person name="Garcia-Bustos J.F."/>
        </authorList>
    </citation>
    <scope>NUCLEOTIDE SEQUENCE [LARGE SCALE GENOMIC DNA]</scope>
    <source>
        <strain>G54</strain>
    </source>
</reference>
<reference key="2">
    <citation type="submission" date="2008-03" db="EMBL/GenBank/DDBJ databases">
        <title>Pneumococcal beta glucoside metabolism investigated by whole genome comparison.</title>
        <authorList>
            <person name="Mulas L."/>
            <person name="Trappetti C."/>
            <person name="Hakenbeck R."/>
            <person name="Iannelli F."/>
            <person name="Pozzi G."/>
            <person name="Davidsen T.M."/>
            <person name="Tettelin H."/>
            <person name="Oggioni M."/>
        </authorList>
    </citation>
    <scope>NUCLEOTIDE SEQUENCE [LARGE SCALE GENOMIC DNA]</scope>
    <source>
        <strain>G54</strain>
    </source>
</reference>
<organism>
    <name type="scientific">Streptococcus pneumoniae serotype 19F (strain G54)</name>
    <dbReference type="NCBI Taxonomy" id="512566"/>
    <lineage>
        <taxon>Bacteria</taxon>
        <taxon>Bacillati</taxon>
        <taxon>Bacillota</taxon>
        <taxon>Bacilli</taxon>
        <taxon>Lactobacillales</taxon>
        <taxon>Streptococcaceae</taxon>
        <taxon>Streptococcus</taxon>
    </lineage>
</organism>
<evidence type="ECO:0000255" key="1">
    <source>
        <dbReference type="HAMAP-Rule" id="MF_00639"/>
    </source>
</evidence>
<protein>
    <recommendedName>
        <fullName evidence="1">UDP-N-acetylmuramoylalanine--D-glutamate ligase</fullName>
        <ecNumber evidence="1">6.3.2.9</ecNumber>
    </recommendedName>
    <alternativeName>
        <fullName evidence="1">D-glutamic acid-adding enzyme</fullName>
    </alternativeName>
    <alternativeName>
        <fullName evidence="1">UDP-N-acetylmuramoyl-L-alanyl-D-glutamate synthetase</fullName>
    </alternativeName>
</protein>
<gene>
    <name evidence="1" type="primary">murD</name>
    <name type="ordered locus">SPG_0628</name>
</gene>
<accession>B5E2Z8</accession>
<feature type="chain" id="PRO_1000130874" description="UDP-N-acetylmuramoylalanine--D-glutamate ligase">
    <location>
        <begin position="1"/>
        <end position="450"/>
    </location>
</feature>
<feature type="binding site" evidence="1">
    <location>
        <begin position="119"/>
        <end position="125"/>
    </location>
    <ligand>
        <name>ATP</name>
        <dbReference type="ChEBI" id="CHEBI:30616"/>
    </ligand>
</feature>
<name>MURD_STRP4</name>
<proteinExistence type="inferred from homology"/>
<keyword id="KW-0067">ATP-binding</keyword>
<keyword id="KW-0131">Cell cycle</keyword>
<keyword id="KW-0132">Cell division</keyword>
<keyword id="KW-0133">Cell shape</keyword>
<keyword id="KW-0961">Cell wall biogenesis/degradation</keyword>
<keyword id="KW-0963">Cytoplasm</keyword>
<keyword id="KW-0436">Ligase</keyword>
<keyword id="KW-0547">Nucleotide-binding</keyword>
<keyword id="KW-0573">Peptidoglycan synthesis</keyword>
<comment type="function">
    <text evidence="1">Cell wall formation. Catalyzes the addition of glutamate to the nucleotide precursor UDP-N-acetylmuramoyl-L-alanine (UMA).</text>
</comment>
<comment type="catalytic activity">
    <reaction evidence="1">
        <text>UDP-N-acetyl-alpha-D-muramoyl-L-alanine + D-glutamate + ATP = UDP-N-acetyl-alpha-D-muramoyl-L-alanyl-D-glutamate + ADP + phosphate + H(+)</text>
        <dbReference type="Rhea" id="RHEA:16429"/>
        <dbReference type="ChEBI" id="CHEBI:15378"/>
        <dbReference type="ChEBI" id="CHEBI:29986"/>
        <dbReference type="ChEBI" id="CHEBI:30616"/>
        <dbReference type="ChEBI" id="CHEBI:43474"/>
        <dbReference type="ChEBI" id="CHEBI:83898"/>
        <dbReference type="ChEBI" id="CHEBI:83900"/>
        <dbReference type="ChEBI" id="CHEBI:456216"/>
        <dbReference type="EC" id="6.3.2.9"/>
    </reaction>
</comment>
<comment type="pathway">
    <text evidence="1">Cell wall biogenesis; peptidoglycan biosynthesis.</text>
</comment>
<comment type="subcellular location">
    <subcellularLocation>
        <location evidence="1">Cytoplasm</location>
    </subcellularLocation>
</comment>
<comment type="similarity">
    <text evidence="1">Belongs to the MurCDEF family.</text>
</comment>